<feature type="signal peptide" evidence="1">
    <location>
        <begin position="1" status="less than"/>
        <end position="19"/>
    </location>
</feature>
<feature type="chain" id="PRO_0000011714" description="Follitropin subunit beta">
    <location>
        <begin position="20"/>
        <end position="126" status="greater than"/>
    </location>
</feature>
<feature type="glycosylation site" description="N-linked (GlcNAc...) asparagine" evidence="2">
    <location>
        <position position="25"/>
    </location>
</feature>
<feature type="glycosylation site" description="N-linked (GlcNAc...) asparagine" evidence="2">
    <location>
        <position position="42"/>
    </location>
</feature>
<feature type="disulfide bond" evidence="2">
    <location>
        <begin position="21"/>
        <end position="69"/>
    </location>
</feature>
<feature type="disulfide bond" evidence="2">
    <location>
        <begin position="35"/>
        <end position="84"/>
    </location>
</feature>
<feature type="disulfide bond" evidence="2">
    <location>
        <begin position="38"/>
        <end position="122"/>
    </location>
</feature>
<feature type="disulfide bond" evidence="2">
    <location>
        <begin position="46"/>
        <end position="100"/>
    </location>
</feature>
<feature type="disulfide bond" evidence="2">
    <location>
        <begin position="50"/>
        <end position="102"/>
    </location>
</feature>
<feature type="disulfide bond" evidence="2">
    <location>
        <begin position="105"/>
        <end position="112"/>
    </location>
</feature>
<feature type="non-terminal residue">
    <location>
        <position position="1"/>
    </location>
</feature>
<feature type="non-terminal residue">
    <location>
        <position position="126"/>
    </location>
</feature>
<comment type="function">
    <text evidence="2">Together with the alpha chain CGA constitutes follitropin, the follicle-stimulating hormone, and provides its biological specificity to the hormone heterodimer. Binds FSHR, a G protein-coupled receptor, on target cells to activate downstream signaling pathways. Follitropin is involved in follicle development and spermatogenesis in reproductive organs.</text>
</comment>
<comment type="subunit">
    <text evidence="2">Heterodimer. The active follitropin is a heterodimer composed of an alpha chain/CGA shared with other hormones and a unique beta chain/FSHB shown here.</text>
</comment>
<comment type="subcellular location">
    <subcellularLocation>
        <location evidence="2">Secreted</location>
    </subcellularLocation>
    <text evidence="2">Efficient secretion requires dimerization with CGA.</text>
</comment>
<comment type="similarity">
    <text evidence="3">Belongs to the glycoprotein hormones subunit beta family.</text>
</comment>
<reference key="1">
    <citation type="journal article" date="2000" name="Biol. Reprod.">
        <title>Differential regulation of pituitary gonadotropin subunit messenger ribonucleic acid levels in photostimulated Siberian hamsters.</title>
        <authorList>
            <person name="Bernard D.J."/>
            <person name="Merzlyak I.Y."/>
            <person name="Horton T.H."/>
            <person name="Turek F.W."/>
        </authorList>
    </citation>
    <scope>NUCLEOTIDE SEQUENCE [MRNA]</scope>
    <source>
        <tissue>Pituitary</tissue>
    </source>
</reference>
<name>FSHB_PHOSU</name>
<keyword id="KW-1015">Disulfide bond</keyword>
<keyword id="KW-0325">Glycoprotein</keyword>
<keyword id="KW-0372">Hormone</keyword>
<keyword id="KW-0964">Secreted</keyword>
<keyword id="KW-0732">Signal</keyword>
<evidence type="ECO:0000250" key="1"/>
<evidence type="ECO:0000250" key="2">
    <source>
        <dbReference type="UniProtKB" id="P01225"/>
    </source>
</evidence>
<evidence type="ECO:0000305" key="3"/>
<protein>
    <recommendedName>
        <fullName>Follitropin subunit beta</fullName>
    </recommendedName>
    <alternativeName>
        <fullName>Follicle-stimulating hormone beta subunit</fullName>
        <shortName>FSH-B</shortName>
        <shortName>FSH-beta</shortName>
    </alternativeName>
    <alternativeName>
        <fullName>Follitropin beta chain</fullName>
    </alternativeName>
</protein>
<sequence>MKLIQLCILFWCWRAICCQGCELTNITIAVEKEECRFCISINTTWCAGYCYTRDLVYKDPARPNTQKICTFKELVYETIRLPGCAHHSDSFYTYPVATECHCGKCDSDSTDCTVRGLGPSYCSFGE</sequence>
<proteinExistence type="evidence at transcript level"/>
<accession>Q9QYB0</accession>
<dbReference type="EMBL" id="AF106914">
    <property type="protein sequence ID" value="AAF15965.1"/>
    <property type="molecule type" value="mRNA"/>
</dbReference>
<dbReference type="SMR" id="Q9QYB0"/>
<dbReference type="GlyCosmos" id="Q9QYB0">
    <property type="glycosylation" value="2 sites, No reported glycans"/>
</dbReference>
<dbReference type="GO" id="GO:0005737">
    <property type="term" value="C:cytoplasm"/>
    <property type="evidence" value="ECO:0007669"/>
    <property type="project" value="TreeGrafter"/>
</dbReference>
<dbReference type="GO" id="GO:0005615">
    <property type="term" value="C:extracellular space"/>
    <property type="evidence" value="ECO:0000250"/>
    <property type="project" value="UniProtKB"/>
</dbReference>
<dbReference type="GO" id="GO:0016914">
    <property type="term" value="C:follicle-stimulating hormone complex"/>
    <property type="evidence" value="ECO:0000250"/>
    <property type="project" value="UniProtKB"/>
</dbReference>
<dbReference type="GO" id="GO:0016913">
    <property type="term" value="F:follicle-stimulating hormone activity"/>
    <property type="evidence" value="ECO:0000250"/>
    <property type="project" value="UniProtKB"/>
</dbReference>
<dbReference type="GO" id="GO:0042699">
    <property type="term" value="P:follicle-stimulating hormone signaling pathway"/>
    <property type="evidence" value="ECO:0007669"/>
    <property type="project" value="TreeGrafter"/>
</dbReference>
<dbReference type="GO" id="GO:0007186">
    <property type="term" value="P:G protein-coupled receptor signaling pathway"/>
    <property type="evidence" value="ECO:0000250"/>
    <property type="project" value="UniProtKB"/>
</dbReference>
<dbReference type="GO" id="GO:0010469">
    <property type="term" value="P:regulation of signaling receptor activity"/>
    <property type="evidence" value="ECO:0000250"/>
    <property type="project" value="UniProtKB"/>
</dbReference>
<dbReference type="CDD" id="cd00069">
    <property type="entry name" value="GHB_like"/>
    <property type="match status" value="1"/>
</dbReference>
<dbReference type="FunFam" id="2.10.90.10:FF:000007">
    <property type="entry name" value="Luteinizing hormone beta subunit"/>
    <property type="match status" value="1"/>
</dbReference>
<dbReference type="Gene3D" id="2.10.90.10">
    <property type="entry name" value="Cystine-knot cytokines"/>
    <property type="match status" value="1"/>
</dbReference>
<dbReference type="InterPro" id="IPR029034">
    <property type="entry name" value="Cystine-knot_cytokine"/>
</dbReference>
<dbReference type="InterPro" id="IPR006208">
    <property type="entry name" value="Glyco_hormone_CN"/>
</dbReference>
<dbReference type="InterPro" id="IPR001545">
    <property type="entry name" value="Gonadotropin_bsu"/>
</dbReference>
<dbReference type="InterPro" id="IPR018245">
    <property type="entry name" value="Gonadotropin_bsu_CS"/>
</dbReference>
<dbReference type="PANTHER" id="PTHR11515:SF17">
    <property type="entry name" value="FOLLITROPIN SUBUNIT BETA"/>
    <property type="match status" value="1"/>
</dbReference>
<dbReference type="PANTHER" id="PTHR11515">
    <property type="entry name" value="GLYCOPROTEIN HORMONE BETA CHAIN"/>
    <property type="match status" value="1"/>
</dbReference>
<dbReference type="Pfam" id="PF00007">
    <property type="entry name" value="Cys_knot"/>
    <property type="match status" value="1"/>
</dbReference>
<dbReference type="SMART" id="SM00068">
    <property type="entry name" value="GHB"/>
    <property type="match status" value="1"/>
</dbReference>
<dbReference type="SUPFAM" id="SSF57501">
    <property type="entry name" value="Cystine-knot cytokines"/>
    <property type="match status" value="1"/>
</dbReference>
<dbReference type="PROSITE" id="PS00261">
    <property type="entry name" value="GLYCO_HORMONE_BETA_1"/>
    <property type="match status" value="1"/>
</dbReference>
<dbReference type="PROSITE" id="PS00689">
    <property type="entry name" value="GLYCO_HORMONE_BETA_2"/>
    <property type="match status" value="1"/>
</dbReference>
<organism>
    <name type="scientific">Phodopus sungorus</name>
    <name type="common">Striped hairy-footed hamster</name>
    <name type="synonym">Djungarian hamster</name>
    <dbReference type="NCBI Taxonomy" id="10044"/>
    <lineage>
        <taxon>Eukaryota</taxon>
        <taxon>Metazoa</taxon>
        <taxon>Chordata</taxon>
        <taxon>Craniata</taxon>
        <taxon>Vertebrata</taxon>
        <taxon>Euteleostomi</taxon>
        <taxon>Mammalia</taxon>
        <taxon>Eutheria</taxon>
        <taxon>Euarchontoglires</taxon>
        <taxon>Glires</taxon>
        <taxon>Rodentia</taxon>
        <taxon>Myomorpha</taxon>
        <taxon>Muroidea</taxon>
        <taxon>Cricetidae</taxon>
        <taxon>Cricetinae</taxon>
        <taxon>Phodopus</taxon>
    </lineage>
</organism>
<gene>
    <name type="primary">FSHB</name>
</gene>